<gene>
    <name type="primary">klhl21</name>
    <name type="ORF">zgc:76933</name>
</gene>
<sequence>MEKPVLQTQPSMLPFFDTAHAVNLLRGIHELRAERKFFDVTLCAEGKEFHCHRTVLAAASMYFRAMFAGTLRESVMDRVVLHEVSAELLGLLVDFCYTGRVTVTHDNVDLLLKTADLFQFPSVKEACCAFLEQRLDVSNCLEIQDFAEAYACRELAASARRFVLKNIVELAKSMDFERLSWKRLLEFVSDDGLCVDKEETAYQIAVRWVKADLQHRLHYWPELLQQVRLPFVRRFYLLAHVESDPLVYLSPACLRLVSEARSFQSYEYDRHDRPGHRMRPRPSTGLAEILVVVGGCDQDCDELVTVDCYNPQTGQWRYLAEFPDHLGGGYSIAALGNDIYVTGGSDGSRLYDCVWRYNSSVNEWTEVSPMLKAREYHSSCVLKGQLYVVGSDSTERYDHTIDCWEALPPMPHPMDNCSTTACRGRLYAIGSLTGEDTMAIQCYDAESNRWSLLNSGELPPWSFAPKSVTLNGLIYFVRDDSAEVDVYNPQKNEWDKISPMTQVHVGGSVSALGGRLYVSGGYDNTFELSDVVEVYDPSSRSWSPAGRLPQPTFWHGSVSIFRQFMPLVQSTFEPIDIPEANAIHLHRHHRNQALHNHNNNVNQNHNQEVNQVH</sequence>
<accession>Q6NYM1</accession>
<dbReference type="EMBL" id="BC066537">
    <property type="protein sequence ID" value="AAH66537.1"/>
    <property type="molecule type" value="mRNA"/>
</dbReference>
<dbReference type="EMBL" id="BC155818">
    <property type="protein sequence ID" value="AAI55819.1"/>
    <property type="molecule type" value="mRNA"/>
</dbReference>
<dbReference type="RefSeq" id="NP_001307336.1">
    <property type="nucleotide sequence ID" value="NM_001320407.1"/>
</dbReference>
<dbReference type="RefSeq" id="XP_005162217.1">
    <property type="nucleotide sequence ID" value="XM_005162160.5"/>
</dbReference>
<dbReference type="RefSeq" id="XP_021325447.1">
    <property type="nucleotide sequence ID" value="XM_021469772.2"/>
</dbReference>
<dbReference type="SMR" id="Q6NYM1"/>
<dbReference type="FunCoup" id="Q6NYM1">
    <property type="interactions" value="195"/>
</dbReference>
<dbReference type="STRING" id="7955.ENSDARP00000115156"/>
<dbReference type="PaxDb" id="7955-ENSDARP00000115156"/>
<dbReference type="Ensembl" id="ENSDART00000137486">
    <property type="protein sequence ID" value="ENSDARP00000121765"/>
    <property type="gene ID" value="ENSDARG00000039255"/>
</dbReference>
<dbReference type="Ensembl" id="ENSDART00000140335">
    <property type="protein sequence ID" value="ENSDARP00000115156"/>
    <property type="gene ID" value="ENSDARG00000039255"/>
</dbReference>
<dbReference type="GeneID" id="404613"/>
<dbReference type="KEGG" id="dre:404613"/>
<dbReference type="AGR" id="ZFIN:ZDB-GENE-040426-2627"/>
<dbReference type="CTD" id="9903"/>
<dbReference type="ZFIN" id="ZDB-GENE-040426-2627">
    <property type="gene designation" value="klhl21"/>
</dbReference>
<dbReference type="eggNOG" id="KOG4441">
    <property type="taxonomic scope" value="Eukaryota"/>
</dbReference>
<dbReference type="HOGENOM" id="CLU_004253_14_2_1"/>
<dbReference type="InParanoid" id="Q6NYM1"/>
<dbReference type="OMA" id="TWSVVGQ"/>
<dbReference type="OrthoDB" id="45365at2759"/>
<dbReference type="PhylomeDB" id="Q6NYM1"/>
<dbReference type="TreeFam" id="TF329218"/>
<dbReference type="Reactome" id="R-DRE-8951664">
    <property type="pathway name" value="Neddylation"/>
</dbReference>
<dbReference type="Reactome" id="R-DRE-983168">
    <property type="pathway name" value="Antigen processing: Ubiquitination &amp; Proteasome degradation"/>
</dbReference>
<dbReference type="UniPathway" id="UPA00143"/>
<dbReference type="PRO" id="PR:Q6NYM1"/>
<dbReference type="Proteomes" id="UP000000437">
    <property type="component" value="Chromosome 23"/>
</dbReference>
<dbReference type="Bgee" id="ENSDARG00000039255">
    <property type="expression patterns" value="Expressed in muscle tissue and 22 other cell types or tissues"/>
</dbReference>
<dbReference type="ExpressionAtlas" id="Q6NYM1">
    <property type="expression patterns" value="baseline and differential"/>
</dbReference>
<dbReference type="GO" id="GO:0031463">
    <property type="term" value="C:Cul3-RING ubiquitin ligase complex"/>
    <property type="evidence" value="ECO:0000250"/>
    <property type="project" value="UniProtKB"/>
</dbReference>
<dbReference type="GO" id="GO:0005737">
    <property type="term" value="C:cytoplasm"/>
    <property type="evidence" value="ECO:0000318"/>
    <property type="project" value="GO_Central"/>
</dbReference>
<dbReference type="GO" id="GO:0005827">
    <property type="term" value="C:polar microtubule"/>
    <property type="evidence" value="ECO:0000250"/>
    <property type="project" value="UniProtKB"/>
</dbReference>
<dbReference type="GO" id="GO:1990756">
    <property type="term" value="F:ubiquitin-like ligase-substrate adaptor activity"/>
    <property type="evidence" value="ECO:0000318"/>
    <property type="project" value="GO_Central"/>
</dbReference>
<dbReference type="GO" id="GO:0051301">
    <property type="term" value="P:cell division"/>
    <property type="evidence" value="ECO:0007669"/>
    <property type="project" value="UniProtKB-KW"/>
</dbReference>
<dbReference type="GO" id="GO:0035853">
    <property type="term" value="P:chromosome passenger complex localization to spindle midzone"/>
    <property type="evidence" value="ECO:0000250"/>
    <property type="project" value="UniProtKB"/>
</dbReference>
<dbReference type="GO" id="GO:0043161">
    <property type="term" value="P:proteasome-mediated ubiquitin-dependent protein catabolic process"/>
    <property type="evidence" value="ECO:0000318"/>
    <property type="project" value="GO_Central"/>
</dbReference>
<dbReference type="GO" id="GO:0016567">
    <property type="term" value="P:protein ubiquitination"/>
    <property type="evidence" value="ECO:0000250"/>
    <property type="project" value="UniProtKB"/>
</dbReference>
<dbReference type="GO" id="GO:0032465">
    <property type="term" value="P:regulation of cytokinesis"/>
    <property type="evidence" value="ECO:0000250"/>
    <property type="project" value="UniProtKB"/>
</dbReference>
<dbReference type="CDD" id="cd18460">
    <property type="entry name" value="BACK_KLHL21"/>
    <property type="match status" value="1"/>
</dbReference>
<dbReference type="CDD" id="cd18250">
    <property type="entry name" value="BTB_POZ_KLHL21"/>
    <property type="match status" value="1"/>
</dbReference>
<dbReference type="FunFam" id="1.25.40.420:FF:000001">
    <property type="entry name" value="Kelch-like family member 12"/>
    <property type="match status" value="1"/>
</dbReference>
<dbReference type="FunFam" id="3.30.710.10:FF:000001">
    <property type="entry name" value="Kelch-like family member 20"/>
    <property type="match status" value="1"/>
</dbReference>
<dbReference type="FunFam" id="2.120.10.80:FF:000044">
    <property type="entry name" value="Kelch-like family member 21"/>
    <property type="match status" value="1"/>
</dbReference>
<dbReference type="Gene3D" id="1.25.40.420">
    <property type="match status" value="1"/>
</dbReference>
<dbReference type="Gene3D" id="2.120.10.80">
    <property type="entry name" value="Kelch-type beta propeller"/>
    <property type="match status" value="1"/>
</dbReference>
<dbReference type="Gene3D" id="3.30.710.10">
    <property type="entry name" value="Potassium Channel Kv1.1, Chain A"/>
    <property type="match status" value="1"/>
</dbReference>
<dbReference type="InterPro" id="IPR011705">
    <property type="entry name" value="BACK"/>
</dbReference>
<dbReference type="InterPro" id="IPR017096">
    <property type="entry name" value="BTB-kelch_protein"/>
</dbReference>
<dbReference type="InterPro" id="IPR000210">
    <property type="entry name" value="BTB/POZ_dom"/>
</dbReference>
<dbReference type="InterPro" id="IPR030577">
    <property type="entry name" value="BTB/POZ_KLHL21"/>
</dbReference>
<dbReference type="InterPro" id="IPR015915">
    <property type="entry name" value="Kelch-typ_b-propeller"/>
</dbReference>
<dbReference type="InterPro" id="IPR006652">
    <property type="entry name" value="Kelch_1"/>
</dbReference>
<dbReference type="InterPro" id="IPR047069">
    <property type="entry name" value="KLHL21_BACK"/>
</dbReference>
<dbReference type="InterPro" id="IPR011333">
    <property type="entry name" value="SKP1/BTB/POZ_sf"/>
</dbReference>
<dbReference type="PANTHER" id="PTHR45632:SF3">
    <property type="entry name" value="KELCH-LIKE PROTEIN 32"/>
    <property type="match status" value="1"/>
</dbReference>
<dbReference type="PANTHER" id="PTHR45632">
    <property type="entry name" value="LD33804P"/>
    <property type="match status" value="1"/>
</dbReference>
<dbReference type="Pfam" id="PF07707">
    <property type="entry name" value="BACK"/>
    <property type="match status" value="1"/>
</dbReference>
<dbReference type="Pfam" id="PF00651">
    <property type="entry name" value="BTB"/>
    <property type="match status" value="1"/>
</dbReference>
<dbReference type="Pfam" id="PF01344">
    <property type="entry name" value="Kelch_1"/>
    <property type="match status" value="2"/>
</dbReference>
<dbReference type="Pfam" id="PF13964">
    <property type="entry name" value="Kelch_6"/>
    <property type="match status" value="1"/>
</dbReference>
<dbReference type="PIRSF" id="PIRSF037037">
    <property type="entry name" value="Kelch-like_protein_gigaxonin"/>
    <property type="match status" value="1"/>
</dbReference>
<dbReference type="SMART" id="SM00875">
    <property type="entry name" value="BACK"/>
    <property type="match status" value="1"/>
</dbReference>
<dbReference type="SMART" id="SM00225">
    <property type="entry name" value="BTB"/>
    <property type="match status" value="1"/>
</dbReference>
<dbReference type="SMART" id="SM00612">
    <property type="entry name" value="Kelch"/>
    <property type="match status" value="5"/>
</dbReference>
<dbReference type="SUPFAM" id="SSF117281">
    <property type="entry name" value="Kelch motif"/>
    <property type="match status" value="1"/>
</dbReference>
<dbReference type="SUPFAM" id="SSF54695">
    <property type="entry name" value="POZ domain"/>
    <property type="match status" value="1"/>
</dbReference>
<dbReference type="PROSITE" id="PS50097">
    <property type="entry name" value="BTB"/>
    <property type="match status" value="1"/>
</dbReference>
<proteinExistence type="evidence at transcript level"/>
<reference key="1">
    <citation type="submission" date="2007-12" db="EMBL/GenBank/DDBJ databases">
        <authorList>
            <consortium name="NIH - Zebrafish Gene Collection (ZGC) project"/>
        </authorList>
    </citation>
    <scope>NUCLEOTIDE SEQUENCE [LARGE SCALE MRNA]</scope>
    <source>
        <tissue>Kidney</tissue>
    </source>
</reference>
<comment type="function">
    <text evidence="1">Substrate-specific adapter of BCR (BTB-CUL3-RBX1) E3 ubiquitin-protein ligase complex required for efficient chromosome alignment and cytokinesis. The BCR(KLHL21) E3 ubiquitin ligase complex regulates localization of the chromosomal passenger complex (CPC) from chromosomes to the spindle midzone in anaphase and mediates the ubiquitination of AURKB (By similarity).</text>
</comment>
<comment type="pathway">
    <text>Protein modification; protein ubiquitination.</text>
</comment>
<comment type="subunit">
    <text evidence="1">Component of the BCR(KLHL21) E3 ubiquitin ligase complex, at least composed of cul3, klhl21 and rbx1.</text>
</comment>
<comment type="subcellular location">
    <subcellularLocation>
        <location evidence="1">Cytoplasm</location>
        <location evidence="1">Cytoskeleton</location>
        <location evidence="1">Spindle</location>
    </subcellularLocation>
    <text evidence="1">Localizes to the spindle midzone and targets CUL3 to this region.</text>
</comment>
<organism>
    <name type="scientific">Danio rerio</name>
    <name type="common">Zebrafish</name>
    <name type="synonym">Brachydanio rerio</name>
    <dbReference type="NCBI Taxonomy" id="7955"/>
    <lineage>
        <taxon>Eukaryota</taxon>
        <taxon>Metazoa</taxon>
        <taxon>Chordata</taxon>
        <taxon>Craniata</taxon>
        <taxon>Vertebrata</taxon>
        <taxon>Euteleostomi</taxon>
        <taxon>Actinopterygii</taxon>
        <taxon>Neopterygii</taxon>
        <taxon>Teleostei</taxon>
        <taxon>Ostariophysi</taxon>
        <taxon>Cypriniformes</taxon>
        <taxon>Danionidae</taxon>
        <taxon>Danioninae</taxon>
        <taxon>Danio</taxon>
    </lineage>
</organism>
<protein>
    <recommendedName>
        <fullName>Kelch-like protein 21</fullName>
    </recommendedName>
</protein>
<evidence type="ECO:0000250" key="1"/>
<evidence type="ECO:0000255" key="2">
    <source>
        <dbReference type="PROSITE-ProRule" id="PRU00037"/>
    </source>
</evidence>
<keyword id="KW-0131">Cell cycle</keyword>
<keyword id="KW-0132">Cell division</keyword>
<keyword id="KW-0963">Cytoplasm</keyword>
<keyword id="KW-0206">Cytoskeleton</keyword>
<keyword id="KW-0880">Kelch repeat</keyword>
<keyword id="KW-0498">Mitosis</keyword>
<keyword id="KW-1185">Reference proteome</keyword>
<keyword id="KW-0677">Repeat</keyword>
<keyword id="KW-0833">Ubl conjugation pathway</keyword>
<feature type="chain" id="PRO_0000396632" description="Kelch-like protein 21">
    <location>
        <begin position="1"/>
        <end position="613"/>
    </location>
</feature>
<feature type="domain" description="BTB" evidence="2">
    <location>
        <begin position="38"/>
        <end position="105"/>
    </location>
</feature>
<feature type="domain" description="BACK">
    <location>
        <begin position="140"/>
        <end position="242"/>
    </location>
</feature>
<feature type="repeat" description="Kelch 1">
    <location>
        <begin position="289"/>
        <end position="337"/>
    </location>
</feature>
<feature type="repeat" description="Kelch 2">
    <location>
        <begin position="338"/>
        <end position="384"/>
    </location>
</feature>
<feature type="repeat" description="Kelch 3">
    <location>
        <begin position="386"/>
        <end position="424"/>
    </location>
</feature>
<feature type="repeat" description="Kelch 4">
    <location>
        <begin position="426"/>
        <end position="472"/>
    </location>
</feature>
<feature type="repeat" description="Kelch 5">
    <location>
        <begin position="474"/>
        <end position="514"/>
    </location>
</feature>
<feature type="repeat" description="Kelch 6">
    <location>
        <begin position="515"/>
        <end position="562"/>
    </location>
</feature>
<name>KLH21_DANRE</name>